<organism>
    <name type="scientific">Exiguobacterium sp. (strain ATCC BAA-1283 / AT1b)</name>
    <dbReference type="NCBI Taxonomy" id="360911"/>
    <lineage>
        <taxon>Bacteria</taxon>
        <taxon>Bacillati</taxon>
        <taxon>Bacillota</taxon>
        <taxon>Bacilli</taxon>
        <taxon>Bacillales</taxon>
        <taxon>Bacillales Family XII. Incertae Sedis</taxon>
        <taxon>Exiguobacterium</taxon>
    </lineage>
</organism>
<evidence type="ECO:0000255" key="1">
    <source>
        <dbReference type="HAMAP-Rule" id="MF_01320"/>
    </source>
</evidence>
<evidence type="ECO:0000256" key="2">
    <source>
        <dbReference type="SAM" id="MobiDB-lite"/>
    </source>
</evidence>
<evidence type="ECO:0000305" key="3"/>
<accession>C4KZP3</accession>
<proteinExistence type="inferred from homology"/>
<feature type="chain" id="PRO_1000214446" description="Large ribosomal subunit protein uL2">
    <location>
        <begin position="1"/>
        <end position="276"/>
    </location>
</feature>
<feature type="region of interest" description="Disordered" evidence="2">
    <location>
        <begin position="28"/>
        <end position="57"/>
    </location>
</feature>
<feature type="region of interest" description="Disordered" evidence="2">
    <location>
        <begin position="219"/>
        <end position="276"/>
    </location>
</feature>
<feature type="compositionally biased region" description="Basic and acidic residues" evidence="2">
    <location>
        <begin position="28"/>
        <end position="38"/>
    </location>
</feature>
<dbReference type="EMBL" id="CP001615">
    <property type="protein sequence ID" value="ACQ70556.1"/>
    <property type="molecule type" value="Genomic_DNA"/>
</dbReference>
<dbReference type="RefSeq" id="WP_012727674.1">
    <property type="nucleotide sequence ID" value="NZ_MOEL01000001.1"/>
</dbReference>
<dbReference type="SMR" id="C4KZP3"/>
<dbReference type="STRING" id="360911.EAT1b_1630"/>
<dbReference type="GeneID" id="94370746"/>
<dbReference type="KEGG" id="eat:EAT1b_1630"/>
<dbReference type="eggNOG" id="COG0090">
    <property type="taxonomic scope" value="Bacteria"/>
</dbReference>
<dbReference type="HOGENOM" id="CLU_036235_2_1_9"/>
<dbReference type="OrthoDB" id="9778722at2"/>
<dbReference type="Proteomes" id="UP000000716">
    <property type="component" value="Chromosome"/>
</dbReference>
<dbReference type="GO" id="GO:0015934">
    <property type="term" value="C:large ribosomal subunit"/>
    <property type="evidence" value="ECO:0007669"/>
    <property type="project" value="InterPro"/>
</dbReference>
<dbReference type="GO" id="GO:0019843">
    <property type="term" value="F:rRNA binding"/>
    <property type="evidence" value="ECO:0007669"/>
    <property type="project" value="UniProtKB-UniRule"/>
</dbReference>
<dbReference type="GO" id="GO:0003735">
    <property type="term" value="F:structural constituent of ribosome"/>
    <property type="evidence" value="ECO:0007669"/>
    <property type="project" value="InterPro"/>
</dbReference>
<dbReference type="GO" id="GO:0016740">
    <property type="term" value="F:transferase activity"/>
    <property type="evidence" value="ECO:0007669"/>
    <property type="project" value="InterPro"/>
</dbReference>
<dbReference type="GO" id="GO:0002181">
    <property type="term" value="P:cytoplasmic translation"/>
    <property type="evidence" value="ECO:0007669"/>
    <property type="project" value="TreeGrafter"/>
</dbReference>
<dbReference type="FunFam" id="2.30.30.30:FF:000001">
    <property type="entry name" value="50S ribosomal protein L2"/>
    <property type="match status" value="1"/>
</dbReference>
<dbReference type="FunFam" id="2.40.50.140:FF:000003">
    <property type="entry name" value="50S ribosomal protein L2"/>
    <property type="match status" value="1"/>
</dbReference>
<dbReference type="FunFam" id="4.10.950.10:FF:000001">
    <property type="entry name" value="50S ribosomal protein L2"/>
    <property type="match status" value="1"/>
</dbReference>
<dbReference type="Gene3D" id="2.30.30.30">
    <property type="match status" value="1"/>
</dbReference>
<dbReference type="Gene3D" id="2.40.50.140">
    <property type="entry name" value="Nucleic acid-binding proteins"/>
    <property type="match status" value="1"/>
</dbReference>
<dbReference type="Gene3D" id="4.10.950.10">
    <property type="entry name" value="Ribosomal protein L2, domain 3"/>
    <property type="match status" value="1"/>
</dbReference>
<dbReference type="HAMAP" id="MF_01320_B">
    <property type="entry name" value="Ribosomal_uL2_B"/>
    <property type="match status" value="1"/>
</dbReference>
<dbReference type="InterPro" id="IPR012340">
    <property type="entry name" value="NA-bd_OB-fold"/>
</dbReference>
<dbReference type="InterPro" id="IPR014722">
    <property type="entry name" value="Rib_uL2_dom2"/>
</dbReference>
<dbReference type="InterPro" id="IPR002171">
    <property type="entry name" value="Ribosomal_uL2"/>
</dbReference>
<dbReference type="InterPro" id="IPR005880">
    <property type="entry name" value="Ribosomal_uL2_bac/org-type"/>
</dbReference>
<dbReference type="InterPro" id="IPR022669">
    <property type="entry name" value="Ribosomal_uL2_C"/>
</dbReference>
<dbReference type="InterPro" id="IPR022671">
    <property type="entry name" value="Ribosomal_uL2_CS"/>
</dbReference>
<dbReference type="InterPro" id="IPR014726">
    <property type="entry name" value="Ribosomal_uL2_dom3"/>
</dbReference>
<dbReference type="InterPro" id="IPR022666">
    <property type="entry name" value="Ribosomal_uL2_RNA-bd_dom"/>
</dbReference>
<dbReference type="InterPro" id="IPR008991">
    <property type="entry name" value="Translation_prot_SH3-like_sf"/>
</dbReference>
<dbReference type="NCBIfam" id="TIGR01171">
    <property type="entry name" value="rplB_bact"/>
    <property type="match status" value="1"/>
</dbReference>
<dbReference type="PANTHER" id="PTHR13691:SF5">
    <property type="entry name" value="LARGE RIBOSOMAL SUBUNIT PROTEIN UL2M"/>
    <property type="match status" value="1"/>
</dbReference>
<dbReference type="PANTHER" id="PTHR13691">
    <property type="entry name" value="RIBOSOMAL PROTEIN L2"/>
    <property type="match status" value="1"/>
</dbReference>
<dbReference type="Pfam" id="PF00181">
    <property type="entry name" value="Ribosomal_L2"/>
    <property type="match status" value="1"/>
</dbReference>
<dbReference type="Pfam" id="PF03947">
    <property type="entry name" value="Ribosomal_L2_C"/>
    <property type="match status" value="1"/>
</dbReference>
<dbReference type="PIRSF" id="PIRSF002158">
    <property type="entry name" value="Ribosomal_L2"/>
    <property type="match status" value="1"/>
</dbReference>
<dbReference type="SMART" id="SM01383">
    <property type="entry name" value="Ribosomal_L2"/>
    <property type="match status" value="1"/>
</dbReference>
<dbReference type="SMART" id="SM01382">
    <property type="entry name" value="Ribosomal_L2_C"/>
    <property type="match status" value="1"/>
</dbReference>
<dbReference type="SUPFAM" id="SSF50249">
    <property type="entry name" value="Nucleic acid-binding proteins"/>
    <property type="match status" value="1"/>
</dbReference>
<dbReference type="SUPFAM" id="SSF50104">
    <property type="entry name" value="Translation proteins SH3-like domain"/>
    <property type="match status" value="1"/>
</dbReference>
<dbReference type="PROSITE" id="PS00467">
    <property type="entry name" value="RIBOSOMAL_L2"/>
    <property type="match status" value="1"/>
</dbReference>
<gene>
    <name evidence="1" type="primary">rplB</name>
    <name type="ordered locus">EAT1b_1630</name>
</gene>
<comment type="function">
    <text evidence="1">One of the primary rRNA binding proteins. Required for association of the 30S and 50S subunits to form the 70S ribosome, for tRNA binding and peptide bond formation. It has been suggested to have peptidyltransferase activity; this is somewhat controversial. Makes several contacts with the 16S rRNA in the 70S ribosome.</text>
</comment>
<comment type="subunit">
    <text evidence="1">Part of the 50S ribosomal subunit. Forms a bridge to the 30S subunit in the 70S ribosome.</text>
</comment>
<comment type="similarity">
    <text evidence="1">Belongs to the universal ribosomal protein uL2 family.</text>
</comment>
<name>RL2_EXISA</name>
<keyword id="KW-0687">Ribonucleoprotein</keyword>
<keyword id="KW-0689">Ribosomal protein</keyword>
<keyword id="KW-0694">RNA-binding</keyword>
<keyword id="KW-0699">rRNA-binding</keyword>
<sequence length="276" mass="30169">MAIKKFKPTTNGRRNMTSLDFAEITTNRPEKSLTEKLSKKGGRNNQGRLTVRHQGGGHKRKYRIIDFKRNKDGVAGRVATIEYDPNRSANIALINYVDGEKRYILAPKGIKVGMEIMSGPEADIKVGNALPLVNIPVGTTIHNIELKPGKGGQLVRAAGASAQIQGRDGKYVIVRLQSGESRLFLGTCRATIGSVGNEEHELVNIGKAGRSRWLGKRPTVRGSVMNPVDHPHGGGEGRAPIGRSGPLTPWGKPALGLKTRKKNKSSDMYILRRRKK</sequence>
<protein>
    <recommendedName>
        <fullName evidence="1">Large ribosomal subunit protein uL2</fullName>
    </recommendedName>
    <alternativeName>
        <fullName evidence="3">50S ribosomal protein L2</fullName>
    </alternativeName>
</protein>
<reference key="1">
    <citation type="journal article" date="2011" name="J. Bacteriol.">
        <title>Complete genome sequence of the Thermophilic Bacterium Exiguobacterium sp. AT1b.</title>
        <authorList>
            <person name="Vishnivetskaya T.A."/>
            <person name="Lucas S."/>
            <person name="Copeland A."/>
            <person name="Lapidus A."/>
            <person name="Glavina del Rio T."/>
            <person name="Dalin E."/>
            <person name="Tice H."/>
            <person name="Bruce D.C."/>
            <person name="Goodwin L.A."/>
            <person name="Pitluck S."/>
            <person name="Saunders E."/>
            <person name="Brettin T."/>
            <person name="Detter C."/>
            <person name="Han C."/>
            <person name="Larimer F."/>
            <person name="Land M.L."/>
            <person name="Hauser L.J."/>
            <person name="Kyrpides N.C."/>
            <person name="Ovchinnikova G."/>
            <person name="Kathariou S."/>
            <person name="Ramaley R.F."/>
            <person name="Rodrigues D.F."/>
            <person name="Hendrix C."/>
            <person name="Richardson P."/>
            <person name="Tiedje J.M."/>
        </authorList>
    </citation>
    <scope>NUCLEOTIDE SEQUENCE [LARGE SCALE GENOMIC DNA]</scope>
    <source>
        <strain>ATCC BAA-1283 / AT1b</strain>
    </source>
</reference>